<gene>
    <name type="ordered locus">YJL107C</name>
    <name type="ORF">J0813</name>
</gene>
<reference key="1">
    <citation type="journal article" date="1995" name="Yeast">
        <title>A 37.5 kb region of yeast chromosome X includes the SME1, MEF2, GSH1 and CSD3 genes, a TCP-1-related gene, an open reading frame similar to the DAL80 gene, and a tRNA(Arg).</title>
        <authorList>
            <person name="Rasmussen S.W."/>
        </authorList>
    </citation>
    <scope>NUCLEOTIDE SEQUENCE [GENOMIC DNA]</scope>
    <source>
        <strain>ATCC 96604 / S288c / FY1679</strain>
    </source>
</reference>
<reference key="2">
    <citation type="journal article" date="1996" name="EMBO J.">
        <title>Complete nucleotide sequence of Saccharomyces cerevisiae chromosome X.</title>
        <authorList>
            <person name="Galibert F."/>
            <person name="Alexandraki D."/>
            <person name="Baur A."/>
            <person name="Boles E."/>
            <person name="Chalwatzis N."/>
            <person name="Chuat J.-C."/>
            <person name="Coster F."/>
            <person name="Cziepluch C."/>
            <person name="de Haan M."/>
            <person name="Domdey H."/>
            <person name="Durand P."/>
            <person name="Entian K.-D."/>
            <person name="Gatius M."/>
            <person name="Goffeau A."/>
            <person name="Grivell L.A."/>
            <person name="Hennemann A."/>
            <person name="Herbert C.J."/>
            <person name="Heumann K."/>
            <person name="Hilger F."/>
            <person name="Hollenberg C.P."/>
            <person name="Huang M.-E."/>
            <person name="Jacq C."/>
            <person name="Jauniaux J.-C."/>
            <person name="Katsoulou C."/>
            <person name="Kirchrath L."/>
            <person name="Kleine K."/>
            <person name="Kordes E."/>
            <person name="Koetter P."/>
            <person name="Liebl S."/>
            <person name="Louis E.J."/>
            <person name="Manus V."/>
            <person name="Mewes H.-W."/>
            <person name="Miosga T."/>
            <person name="Obermaier B."/>
            <person name="Perea J."/>
            <person name="Pohl T.M."/>
            <person name="Portetelle D."/>
            <person name="Pujol A."/>
            <person name="Purnelle B."/>
            <person name="Ramezani Rad M."/>
            <person name="Rasmussen S.W."/>
            <person name="Rose M."/>
            <person name="Rossau R."/>
            <person name="Schaaff-Gerstenschlaeger I."/>
            <person name="Smits P.H.M."/>
            <person name="Scarcez T."/>
            <person name="Soriano N."/>
            <person name="To Van D."/>
            <person name="Tzermia M."/>
            <person name="Van Broekhoven A."/>
            <person name="Vandenbol M."/>
            <person name="Wedler H."/>
            <person name="von Wettstein D."/>
            <person name="Wambutt R."/>
            <person name="Zagulski M."/>
            <person name="Zollner A."/>
            <person name="Karpfinger-Hartl L."/>
        </authorList>
    </citation>
    <scope>NUCLEOTIDE SEQUENCE [LARGE SCALE GENOMIC DNA]</scope>
    <source>
        <strain>ATCC 204508 / S288c</strain>
    </source>
</reference>
<reference key="3">
    <citation type="journal article" date="2014" name="G3 (Bethesda)">
        <title>The reference genome sequence of Saccharomyces cerevisiae: Then and now.</title>
        <authorList>
            <person name="Engel S.R."/>
            <person name="Dietrich F.S."/>
            <person name="Fisk D.G."/>
            <person name="Binkley G."/>
            <person name="Balakrishnan R."/>
            <person name="Costanzo M.C."/>
            <person name="Dwight S.S."/>
            <person name="Hitz B.C."/>
            <person name="Karra K."/>
            <person name="Nash R.S."/>
            <person name="Weng S."/>
            <person name="Wong E.D."/>
            <person name="Lloyd P."/>
            <person name="Skrzypek M.S."/>
            <person name="Miyasato S.R."/>
            <person name="Simison M."/>
            <person name="Cherry J.M."/>
        </authorList>
    </citation>
    <scope>GENOME REANNOTATION</scope>
    <source>
        <strain>ATCC 204508 / S288c</strain>
    </source>
</reference>
<reference key="4">
    <citation type="journal article" date="2007" name="Genome Res.">
        <title>Approaching a complete repository of sequence-verified protein-encoding clones for Saccharomyces cerevisiae.</title>
        <authorList>
            <person name="Hu Y."/>
            <person name="Rolfs A."/>
            <person name="Bhullar B."/>
            <person name="Murthy T.V.S."/>
            <person name="Zhu C."/>
            <person name="Berger M.F."/>
            <person name="Camargo A.A."/>
            <person name="Kelley F."/>
            <person name="McCarron S."/>
            <person name="Jepson D."/>
            <person name="Richardson A."/>
            <person name="Raphael J."/>
            <person name="Moreira D."/>
            <person name="Taycher E."/>
            <person name="Zuo D."/>
            <person name="Mohr S."/>
            <person name="Kane M.F."/>
            <person name="Williamson J."/>
            <person name="Simpson A.J.G."/>
            <person name="Bulyk M.L."/>
            <person name="Harlow E."/>
            <person name="Marsischky G."/>
            <person name="Kolodner R.D."/>
            <person name="LaBaer J."/>
        </authorList>
    </citation>
    <scope>NUCLEOTIDE SEQUENCE [GENOMIC DNA]</scope>
    <source>
        <strain>ATCC 204508 / S288c</strain>
    </source>
</reference>
<reference key="5">
    <citation type="journal article" date="2003" name="Genome Biol.">
        <title>Reinvestigation of the Saccharomyces cerevisiae genome annotation by comparison to the genome of a related fungus: Ashbya gossypii.</title>
        <authorList>
            <person name="Brachat S."/>
            <person name="Dietrich F.S."/>
            <person name="Voegeli S."/>
            <person name="Zhang Z."/>
            <person name="Stuart L."/>
            <person name="Lerch A."/>
            <person name="Gates K."/>
            <person name="Gaffney T.D."/>
            <person name="Philippsen P."/>
        </authorList>
    </citation>
    <scope>NUCLEOTIDE SEQUENCE [GENOMIC DNA] OF 360-387</scope>
    <scope>CONFIRMATION OF FRAMESHIFT</scope>
    <source>
        <strain>ATCC 204511 / S288c / AB972</strain>
    </source>
</reference>
<reference key="6">
    <citation type="journal article" date="2000" name="Yeast">
        <title>Organization of specific genomic regions of Zygosaccharomyces rouxii and Pichia sorbitophila: comparison with Saccharomyces cerevisiae.</title>
        <authorList>
            <person name="Sychrova H."/>
            <person name="Braun V."/>
            <person name="Potier S."/>
            <person name="Souciet J.L."/>
        </authorList>
    </citation>
    <scope>CONFIRMATION OF FRAMESHIFT</scope>
    <source>
        <strain>ATCC 204508 / S288c</strain>
        <strain>ATCC 28383 / FL100 / VTT C-80102</strain>
    </source>
</reference>
<reference key="7">
    <citation type="journal article" date="2003" name="Nature">
        <title>Global analysis of protein expression in yeast.</title>
        <authorList>
            <person name="Ghaemmaghami S."/>
            <person name="Huh W.-K."/>
            <person name="Bower K."/>
            <person name="Howson R.W."/>
            <person name="Belle A."/>
            <person name="Dephoure N."/>
            <person name="O'Shea E.K."/>
            <person name="Weissman J.S."/>
        </authorList>
    </citation>
    <scope>LEVEL OF PROTEIN EXPRESSION [LARGE SCALE ANALYSIS]</scope>
</reference>
<organism>
    <name type="scientific">Saccharomyces cerevisiae (strain ATCC 204508 / S288c)</name>
    <name type="common">Baker's yeast</name>
    <dbReference type="NCBI Taxonomy" id="559292"/>
    <lineage>
        <taxon>Eukaryota</taxon>
        <taxon>Fungi</taxon>
        <taxon>Dikarya</taxon>
        <taxon>Ascomycota</taxon>
        <taxon>Saccharomycotina</taxon>
        <taxon>Saccharomycetes</taxon>
        <taxon>Saccharomycetales</taxon>
        <taxon>Saccharomycetaceae</taxon>
        <taxon>Saccharomyces</taxon>
    </lineage>
</organism>
<keyword id="KW-1185">Reference proteome</keyword>
<protein>
    <recommendedName>
        <fullName>Uncharacterized protein YJL107C</fullName>
    </recommendedName>
</protein>
<dbReference type="EMBL" id="X85021">
    <property type="protein sequence ID" value="CAA59387.1"/>
    <property type="molecule type" value="Genomic_DNA"/>
</dbReference>
<dbReference type="EMBL" id="Z49383">
    <property type="protein sequence ID" value="CAA89403.1"/>
    <property type="molecule type" value="Genomic_DNA"/>
</dbReference>
<dbReference type="EMBL" id="AY557885">
    <property type="protein sequence ID" value="AAS56211.1"/>
    <property type="molecule type" value="Genomic_DNA"/>
</dbReference>
<dbReference type="EMBL" id="AY227895">
    <property type="status" value="NOT_ANNOTATED_CDS"/>
    <property type="molecule type" value="Genomic_DNA"/>
</dbReference>
<dbReference type="EMBL" id="BK006943">
    <property type="protein sequence ID" value="DAA08693.1"/>
    <property type="molecule type" value="Genomic_DNA"/>
</dbReference>
<dbReference type="PIR" id="S53380">
    <property type="entry name" value="S53380"/>
</dbReference>
<dbReference type="RefSeq" id="NP_012428.1">
    <property type="nucleotide sequence ID" value="NM_001181540.1"/>
</dbReference>
<dbReference type="BioGRID" id="33649">
    <property type="interactions" value="148"/>
</dbReference>
<dbReference type="DIP" id="DIP-5095N"/>
<dbReference type="FunCoup" id="P42947">
    <property type="interactions" value="63"/>
</dbReference>
<dbReference type="IntAct" id="P42947">
    <property type="interactions" value="1"/>
</dbReference>
<dbReference type="MINT" id="P42947"/>
<dbReference type="STRING" id="4932.YJL107C"/>
<dbReference type="iPTMnet" id="P42947"/>
<dbReference type="PaxDb" id="4932-YJL107C"/>
<dbReference type="PeptideAtlas" id="P42947"/>
<dbReference type="EnsemblFungi" id="YJL107C_mRNA">
    <property type="protein sequence ID" value="YJL107C"/>
    <property type="gene ID" value="YJL107C"/>
</dbReference>
<dbReference type="GeneID" id="853337"/>
<dbReference type="KEGG" id="sce:YJL107C"/>
<dbReference type="AGR" id="SGD:S000003643"/>
<dbReference type="SGD" id="S000003643">
    <property type="gene designation" value="YJL107C"/>
</dbReference>
<dbReference type="VEuPathDB" id="FungiDB:YJL107C"/>
<dbReference type="eggNOG" id="ENOG502QPMM">
    <property type="taxonomic scope" value="Eukaryota"/>
</dbReference>
<dbReference type="GeneTree" id="ENSGT00940000176490"/>
<dbReference type="HOGENOM" id="CLU_060178_0_0_1"/>
<dbReference type="InParanoid" id="P42947"/>
<dbReference type="OMA" id="DGQFCIF"/>
<dbReference type="OrthoDB" id="413008at2759"/>
<dbReference type="BioCyc" id="YEAST:G3O-31561-MONOMER"/>
<dbReference type="BioGRID-ORCS" id="853337">
    <property type="hits" value="0 hits in 10 CRISPR screens"/>
</dbReference>
<dbReference type="PRO" id="PR:P42947"/>
<dbReference type="Proteomes" id="UP000002311">
    <property type="component" value="Chromosome X"/>
</dbReference>
<dbReference type="RNAct" id="P42947">
    <property type="molecule type" value="protein"/>
</dbReference>
<dbReference type="GO" id="GO:0022857">
    <property type="term" value="F:transmembrane transporter activity"/>
    <property type="evidence" value="ECO:0007669"/>
    <property type="project" value="InterPro"/>
</dbReference>
<dbReference type="InterPro" id="IPR010619">
    <property type="entry name" value="ThrE-like_N"/>
</dbReference>
<dbReference type="InterPro" id="IPR051361">
    <property type="entry name" value="ThrE/Ser_Exporter"/>
</dbReference>
<dbReference type="PANTHER" id="PTHR31082">
    <property type="entry name" value="PHEROMONE-REGULATED MEMBRANE PROTEIN 10"/>
    <property type="match status" value="1"/>
</dbReference>
<dbReference type="PANTHER" id="PTHR31082:SF4">
    <property type="entry name" value="PHEROMONE-REGULATED MEMBRANE PROTEIN 10"/>
    <property type="match status" value="1"/>
</dbReference>
<dbReference type="Pfam" id="PF06738">
    <property type="entry name" value="ThrE"/>
    <property type="match status" value="1"/>
</dbReference>
<evidence type="ECO:0000256" key="1">
    <source>
        <dbReference type="SAM" id="MobiDB-lite"/>
    </source>
</evidence>
<evidence type="ECO:0000269" key="2">
    <source>
    </source>
</evidence>
<evidence type="ECO:0000305" key="3"/>
<comment type="miscellaneous">
    <text evidence="2">Present with 1480 molecules/cell in log phase SD medium.</text>
</comment>
<comment type="similarity">
    <text evidence="3">Belongs to the ThrE exporter (TC 2.A.79) family.</text>
</comment>
<comment type="caution">
    <text evidence="3">This is a truncated version of a ThrE family protein. Strain S288c has a frameshift in position 382, which disrupts the gene coding for this protein and produces two ORFs YJL107C and YJL108C. A contiguous sequence for a S.cerevisiae ThrE family protein can be found in strain YJM789 (AC A6ZQL9).</text>
</comment>
<proteinExistence type="evidence at protein level"/>
<name>YJK7_YEAST</name>
<accession>P42947</accession>
<accession>D6VW77</accession>
<sequence length="387" mass="42508">MDGRNEKPTTPVSDFRVGSSEQSQAGVNLEDSSDHRTSNSAESKKGNLSGKSISDLGISNNDNKNVRFTADTDALENDLSSRSTETSDNSKGTDGQDEEDRPARHKRKPKVSFTHLRNNGKDGDDETFIKKIINNLTGNQGGLVPGLAPIPSENENGKNDIEKNNRNEEIPLSDLADASKIVDVHEGDDKEKLEALKLEGDVNCTSDGETLGSSSKNSFLAPAVDHFDDYAENNSSDDNEGFIETSTYVPPPSQVKSGVLGSLLKLYQNEDQNSSSIFSDSQAVTTDDEGISSTAGNKDVPVAKRSRLQNLKGKAKKGRMPRLKKRLKTEAKITVHIADILQRHRFILRMCRALMMYGAPTHRLEEYMVMTSRVLEIDGQFCIFQVV</sequence>
<feature type="chain" id="PRO_0000203046" description="Uncharacterized protein YJL107C">
    <location>
        <begin position="1"/>
        <end position="387"/>
    </location>
</feature>
<feature type="region of interest" description="Disordered" evidence="1">
    <location>
        <begin position="1"/>
        <end position="126"/>
    </location>
</feature>
<feature type="region of interest" description="Disordered" evidence="1">
    <location>
        <begin position="138"/>
        <end position="169"/>
    </location>
</feature>
<feature type="region of interest" description="Disordered" evidence="1">
    <location>
        <begin position="275"/>
        <end position="298"/>
    </location>
</feature>
<feature type="compositionally biased region" description="Basic and acidic residues" evidence="1">
    <location>
        <begin position="32"/>
        <end position="45"/>
    </location>
</feature>
<feature type="compositionally biased region" description="Polar residues" evidence="1">
    <location>
        <begin position="49"/>
        <end position="63"/>
    </location>
</feature>
<feature type="compositionally biased region" description="Polar residues" evidence="1">
    <location>
        <begin position="78"/>
        <end position="93"/>
    </location>
</feature>
<feature type="compositionally biased region" description="Basic and acidic residues" evidence="1">
    <location>
        <begin position="155"/>
        <end position="169"/>
    </location>
</feature>
<feature type="compositionally biased region" description="Polar residues" evidence="1">
    <location>
        <begin position="275"/>
        <end position="296"/>
    </location>
</feature>